<accession>B4EDZ2</accession>
<organism>
    <name type="scientific">Burkholderia cenocepacia (strain ATCC BAA-245 / DSM 16553 / LMG 16656 / NCTC 13227 / J2315 / CF5610)</name>
    <name type="common">Burkholderia cepacia (strain J2315)</name>
    <dbReference type="NCBI Taxonomy" id="216591"/>
    <lineage>
        <taxon>Bacteria</taxon>
        <taxon>Pseudomonadati</taxon>
        <taxon>Pseudomonadota</taxon>
        <taxon>Betaproteobacteria</taxon>
        <taxon>Burkholderiales</taxon>
        <taxon>Burkholderiaceae</taxon>
        <taxon>Burkholderia</taxon>
        <taxon>Burkholderia cepacia complex</taxon>
    </lineage>
</organism>
<keyword id="KW-0067">ATP-binding</keyword>
<keyword id="KW-0143">Chaperone</keyword>
<keyword id="KW-0547">Nucleotide-binding</keyword>
<keyword id="KW-0597">Phosphoprotein</keyword>
<keyword id="KW-0346">Stress response</keyword>
<gene>
    <name evidence="1" type="primary">dnaK</name>
    <name type="ordered locus">BceJ2315_32100</name>
    <name type="ORF">BCAL3270</name>
</gene>
<protein>
    <recommendedName>
        <fullName evidence="1">Chaperone protein DnaK</fullName>
    </recommendedName>
    <alternativeName>
        <fullName evidence="1">HSP70</fullName>
    </alternativeName>
    <alternativeName>
        <fullName evidence="1">Heat shock 70 kDa protein</fullName>
    </alternativeName>
    <alternativeName>
        <fullName evidence="1">Heat shock protein 70</fullName>
    </alternativeName>
</protein>
<sequence>MGKIIGIDLGTTNSCVAIMEGNQVKVIENSEGARTTPSIIAYMDDNEVLVGAPAKRQSVTNPKNTLFAVKRLIGRRFEEKEVQKDIGLMPYSIIKADNGDAWVEAHGEKLAPPQVSAEVLRKMKKTAEDYLGEPVTEAVITVPAYFNDSQRQATKDAGRIAGLEVKRIINEPTAAALAFGLDKAEKGDRKIAVYDLGGGTFDVSIIEIADVDGEMQFEVLSTNGDTFLGGEDFDQRIIDYIIGEFKKEQGVDLSKDVLALQRLKEAAEKAKIELSSGQQTEINLPYITADASGPKHLNLKITRAKLEALVEDLVERTIEPCRIAIKDAGVKVSDIDDVILVGGQTRMPKVMEKVKEFFGKDPRRDVNPDEAVAVGAAIQGQVLSGDRKDVLLLDVTPLSLGIETLGGVMTKMINKNTTIPTKHAQVYSTADDNQGAVTIKVFQGEREMAAGNKLLGEFNLEGIPPAPRGVPQIEVTFDIDANGILHVGAKDKATGKENKITIKANSGLSEAEIDQMIKDAEANAAEDHKLRELADSRNQGDALVHSTKKALTEYGDKLDAGEKEAIEAALKSLEDVLKDTSADKAAIDAKVEELGKVSQKLGEKMYADMQAQQAGAAGAAGAAEGAAHAGGAQQAADDVVDAEFKEVKKD</sequence>
<name>DNAK_BURCJ</name>
<comment type="function">
    <text evidence="1">Acts as a chaperone.</text>
</comment>
<comment type="induction">
    <text evidence="1">By stress conditions e.g. heat shock.</text>
</comment>
<comment type="similarity">
    <text evidence="1">Belongs to the heat shock protein 70 family.</text>
</comment>
<feature type="chain" id="PRO_1000119679" description="Chaperone protein DnaK">
    <location>
        <begin position="1"/>
        <end position="650"/>
    </location>
</feature>
<feature type="region of interest" description="Disordered" evidence="2">
    <location>
        <begin position="614"/>
        <end position="634"/>
    </location>
</feature>
<feature type="modified residue" description="Phosphothreonine; by autocatalysis" evidence="1">
    <location>
        <position position="200"/>
    </location>
</feature>
<reference key="1">
    <citation type="journal article" date="2009" name="J. Bacteriol.">
        <title>The genome of Burkholderia cenocepacia J2315, an epidemic pathogen of cystic fibrosis patients.</title>
        <authorList>
            <person name="Holden M.T."/>
            <person name="Seth-Smith H.M."/>
            <person name="Crossman L.C."/>
            <person name="Sebaihia M."/>
            <person name="Bentley S.D."/>
            <person name="Cerdeno-Tarraga A.M."/>
            <person name="Thomson N.R."/>
            <person name="Bason N."/>
            <person name="Quail M.A."/>
            <person name="Sharp S."/>
            <person name="Cherevach I."/>
            <person name="Churcher C."/>
            <person name="Goodhead I."/>
            <person name="Hauser H."/>
            <person name="Holroyd N."/>
            <person name="Mungall K."/>
            <person name="Scott P."/>
            <person name="Walker D."/>
            <person name="White B."/>
            <person name="Rose H."/>
            <person name="Iversen P."/>
            <person name="Mil-Homens D."/>
            <person name="Rocha E.P."/>
            <person name="Fialho A.M."/>
            <person name="Baldwin A."/>
            <person name="Dowson C."/>
            <person name="Barrell B.G."/>
            <person name="Govan J.R."/>
            <person name="Vandamme P."/>
            <person name="Hart C.A."/>
            <person name="Mahenthiralingam E."/>
            <person name="Parkhill J."/>
        </authorList>
    </citation>
    <scope>NUCLEOTIDE SEQUENCE [LARGE SCALE GENOMIC DNA]</scope>
    <source>
        <strain>ATCC BAA-245 / DSM 16553 / LMG 16656 / NCTC 13227 / J2315 / CF5610</strain>
    </source>
</reference>
<proteinExistence type="inferred from homology"/>
<evidence type="ECO:0000255" key="1">
    <source>
        <dbReference type="HAMAP-Rule" id="MF_00332"/>
    </source>
</evidence>
<evidence type="ECO:0000256" key="2">
    <source>
        <dbReference type="SAM" id="MobiDB-lite"/>
    </source>
</evidence>
<dbReference type="EMBL" id="AM747720">
    <property type="protein sequence ID" value="CAR53594.1"/>
    <property type="molecule type" value="Genomic_DNA"/>
</dbReference>
<dbReference type="RefSeq" id="WP_006484920.1">
    <property type="nucleotide sequence ID" value="NC_011000.1"/>
</dbReference>
<dbReference type="SMR" id="B4EDZ2"/>
<dbReference type="GeneID" id="56557189"/>
<dbReference type="KEGG" id="bcj:BCAL3270"/>
<dbReference type="eggNOG" id="COG0443">
    <property type="taxonomic scope" value="Bacteria"/>
</dbReference>
<dbReference type="HOGENOM" id="CLU_005965_2_1_4"/>
<dbReference type="BioCyc" id="BCEN216591:G1G1V-3641-MONOMER"/>
<dbReference type="Proteomes" id="UP000001035">
    <property type="component" value="Chromosome 1"/>
</dbReference>
<dbReference type="GO" id="GO:0005524">
    <property type="term" value="F:ATP binding"/>
    <property type="evidence" value="ECO:0007669"/>
    <property type="project" value="UniProtKB-UniRule"/>
</dbReference>
<dbReference type="GO" id="GO:0140662">
    <property type="term" value="F:ATP-dependent protein folding chaperone"/>
    <property type="evidence" value="ECO:0007669"/>
    <property type="project" value="InterPro"/>
</dbReference>
<dbReference type="GO" id="GO:0051082">
    <property type="term" value="F:unfolded protein binding"/>
    <property type="evidence" value="ECO:0007669"/>
    <property type="project" value="InterPro"/>
</dbReference>
<dbReference type="CDD" id="cd10234">
    <property type="entry name" value="ASKHA_NBD_HSP70_DnaK-like"/>
    <property type="match status" value="1"/>
</dbReference>
<dbReference type="FunFam" id="2.60.34.10:FF:000014">
    <property type="entry name" value="Chaperone protein DnaK HSP70"/>
    <property type="match status" value="1"/>
</dbReference>
<dbReference type="FunFam" id="3.30.30.30:FF:000003">
    <property type="entry name" value="Heat shock protein 9"/>
    <property type="match status" value="1"/>
</dbReference>
<dbReference type="FunFam" id="1.20.1270.10:FF:000001">
    <property type="entry name" value="Molecular chaperone DnaK"/>
    <property type="match status" value="1"/>
</dbReference>
<dbReference type="FunFam" id="3.30.420.40:FF:000004">
    <property type="entry name" value="Molecular chaperone DnaK"/>
    <property type="match status" value="1"/>
</dbReference>
<dbReference type="FunFam" id="3.90.640.10:FF:000003">
    <property type="entry name" value="Molecular chaperone DnaK"/>
    <property type="match status" value="1"/>
</dbReference>
<dbReference type="Gene3D" id="1.20.1270.10">
    <property type="match status" value="1"/>
</dbReference>
<dbReference type="Gene3D" id="3.30.420.40">
    <property type="match status" value="2"/>
</dbReference>
<dbReference type="Gene3D" id="3.90.640.10">
    <property type="entry name" value="Actin, Chain A, domain 4"/>
    <property type="match status" value="1"/>
</dbReference>
<dbReference type="Gene3D" id="2.60.34.10">
    <property type="entry name" value="Substrate Binding Domain Of DNAk, Chain A, domain 1"/>
    <property type="match status" value="1"/>
</dbReference>
<dbReference type="HAMAP" id="MF_00332">
    <property type="entry name" value="DnaK"/>
    <property type="match status" value="1"/>
</dbReference>
<dbReference type="InterPro" id="IPR043129">
    <property type="entry name" value="ATPase_NBD"/>
</dbReference>
<dbReference type="InterPro" id="IPR012725">
    <property type="entry name" value="Chaperone_DnaK"/>
</dbReference>
<dbReference type="InterPro" id="IPR018181">
    <property type="entry name" value="Heat_shock_70_CS"/>
</dbReference>
<dbReference type="InterPro" id="IPR029048">
    <property type="entry name" value="HSP70_C_sf"/>
</dbReference>
<dbReference type="InterPro" id="IPR029047">
    <property type="entry name" value="HSP70_peptide-bd_sf"/>
</dbReference>
<dbReference type="InterPro" id="IPR013126">
    <property type="entry name" value="Hsp_70_fam"/>
</dbReference>
<dbReference type="NCBIfam" id="NF001413">
    <property type="entry name" value="PRK00290.1"/>
    <property type="match status" value="1"/>
</dbReference>
<dbReference type="NCBIfam" id="NF003520">
    <property type="entry name" value="PRK05183.1"/>
    <property type="match status" value="1"/>
</dbReference>
<dbReference type="NCBIfam" id="TIGR02350">
    <property type="entry name" value="prok_dnaK"/>
    <property type="match status" value="1"/>
</dbReference>
<dbReference type="PANTHER" id="PTHR19375">
    <property type="entry name" value="HEAT SHOCK PROTEIN 70KDA"/>
    <property type="match status" value="1"/>
</dbReference>
<dbReference type="Pfam" id="PF00012">
    <property type="entry name" value="HSP70"/>
    <property type="match status" value="1"/>
</dbReference>
<dbReference type="PRINTS" id="PR00301">
    <property type="entry name" value="HEATSHOCK70"/>
</dbReference>
<dbReference type="SUPFAM" id="SSF53067">
    <property type="entry name" value="Actin-like ATPase domain"/>
    <property type="match status" value="2"/>
</dbReference>
<dbReference type="SUPFAM" id="SSF100934">
    <property type="entry name" value="Heat shock protein 70kD (HSP70), C-terminal subdomain"/>
    <property type="match status" value="1"/>
</dbReference>
<dbReference type="SUPFAM" id="SSF100920">
    <property type="entry name" value="Heat shock protein 70kD (HSP70), peptide-binding domain"/>
    <property type="match status" value="1"/>
</dbReference>
<dbReference type="PROSITE" id="PS00297">
    <property type="entry name" value="HSP70_1"/>
    <property type="match status" value="1"/>
</dbReference>
<dbReference type="PROSITE" id="PS00329">
    <property type="entry name" value="HSP70_2"/>
    <property type="match status" value="1"/>
</dbReference>
<dbReference type="PROSITE" id="PS01036">
    <property type="entry name" value="HSP70_3"/>
    <property type="match status" value="1"/>
</dbReference>